<feature type="chain" id="PRO_0000238645" description="SMY2 homolog 2">
    <location>
        <begin position="1"/>
        <end position="849"/>
    </location>
</feature>
<feature type="domain" description="GYF" evidence="2">
    <location>
        <begin position="149"/>
        <end position="205"/>
    </location>
</feature>
<feature type="region of interest" description="Disordered" evidence="3">
    <location>
        <begin position="305"/>
        <end position="505"/>
    </location>
</feature>
<feature type="region of interest" description="Disordered" evidence="3">
    <location>
        <begin position="527"/>
        <end position="547"/>
    </location>
</feature>
<feature type="region of interest" description="Disordered" evidence="3">
    <location>
        <begin position="593"/>
        <end position="612"/>
    </location>
</feature>
<feature type="region of interest" description="Disordered" evidence="3">
    <location>
        <begin position="634"/>
        <end position="661"/>
    </location>
</feature>
<feature type="coiled-coil region" evidence="1">
    <location>
        <begin position="410"/>
        <end position="484"/>
    </location>
</feature>
<feature type="compositionally biased region" description="Low complexity" evidence="3">
    <location>
        <begin position="308"/>
        <end position="318"/>
    </location>
</feature>
<feature type="compositionally biased region" description="Basic and acidic residues" evidence="3">
    <location>
        <begin position="319"/>
        <end position="331"/>
    </location>
</feature>
<feature type="compositionally biased region" description="Basic and acidic residues" evidence="3">
    <location>
        <begin position="361"/>
        <end position="375"/>
    </location>
</feature>
<feature type="compositionally biased region" description="Basic and acidic residues" evidence="3">
    <location>
        <begin position="387"/>
        <end position="403"/>
    </location>
</feature>
<feature type="compositionally biased region" description="Basic and acidic residues" evidence="3">
    <location>
        <begin position="425"/>
        <end position="443"/>
    </location>
</feature>
<feature type="compositionally biased region" description="Basic residues" evidence="3">
    <location>
        <begin position="444"/>
        <end position="455"/>
    </location>
</feature>
<feature type="compositionally biased region" description="Basic and acidic residues" evidence="3">
    <location>
        <begin position="456"/>
        <end position="479"/>
    </location>
</feature>
<feature type="compositionally biased region" description="Polar residues" evidence="3">
    <location>
        <begin position="483"/>
        <end position="505"/>
    </location>
</feature>
<feature type="compositionally biased region" description="Polar residues" evidence="3">
    <location>
        <begin position="594"/>
        <end position="605"/>
    </location>
</feature>
<feature type="compositionally biased region" description="Low complexity" evidence="3">
    <location>
        <begin position="644"/>
        <end position="661"/>
    </location>
</feature>
<feature type="modified residue" description="Phosphothreonine" evidence="8">
    <location>
        <position position="350"/>
    </location>
</feature>
<sequence>MNPINSLAFDLHSVKLADANSDTAALSNSNTPTMNNAALLQRPSSIMDSIGVQRVPSPFVPGSNAISGASTVPFNAYDAEITGSPLQISANQENNSAFSAASSNLHMNASSPSVLNKPSSTFPNVAPYLYNATGPAPNVGNQPPPPGIESQWKYIDSNGNIQGPFGTNNMSQWYQGGYFTPTLQICRLATSPEPFGVNDRFIRLGELTTLVNNYQDPFVAFDFIVIRALNAVPLVAPTSSEKQKVESRDLIPVADVHSDDFTYEEILGLKFEDGSYYHETQVWVPVDGRHITKVDRIPKISAYTAPLSTTSSRSNKTTSSHEEKVPSHEEASPEEQEVFSEEGRTVSNITNEEESIVKNPTKQEEESRGSEKEQNILDQVQPEIEEVDRKDVISTADEPKSKDTPQMTSEEQKRFAKAELMAQKLLEEQQRQEEEKKRREEQRKLKKEKKLKQKQKKEEEKLKKKKKEEGKLEKEKQKELLNNILTGDTETPSSENTATSITTNLAPWANKKPEGAVYNQISSALEDLKKENSSKKEKKPNRTQLDREQALKLQKEILSSAQIPKTQTGSAWGIKPQQPIKVDIKGELMKDSTKINSQSKINKANNGDIKPDSTFIEEQKKLWEQVQKKTKKFNRASSLDDFISRTPSPSSSALNSSNTSNAWTTVSSKSTTHIASTMPVAGNQSKSYISLDTLRSSGGLSTATKTKMSDKSKQIGSSTSIPTLKARQVKPSRIPAYPGNASVSKRQEFLRWCRSQLKLNTGVQPDNVLEMLLSLPPGSESKEIIADTIYSYSSTMDGRRFATDFIKKRLECEEEINDPLSWSEVLAMPEGSSEDWEFQVVGKKKGKRF</sequence>
<protein>
    <recommendedName>
        <fullName>SMY2 homolog 2</fullName>
    </recommendedName>
</protein>
<comment type="subunit">
    <text evidence="6">Interacts with ribosomes. Interacts with EAP1 and MSL5 (via the GYP domain).</text>
</comment>
<comment type="subcellular location">
    <subcellularLocation>
        <location evidence="4">Cytoplasm</location>
    </subcellularLocation>
</comment>
<comment type="miscellaneous">
    <text evidence="5">Present with 830 molecules/cell in log phase SD medium.</text>
</comment>
<comment type="similarity">
    <text evidence="7">Belongs to the SMY2/mpd2 family.</text>
</comment>
<organism>
    <name type="scientific">Saccharomyces cerevisiae (strain ATCC 204508 / S288c)</name>
    <name type="common">Baker's yeast</name>
    <dbReference type="NCBI Taxonomy" id="559292"/>
    <lineage>
        <taxon>Eukaryota</taxon>
        <taxon>Fungi</taxon>
        <taxon>Dikarya</taxon>
        <taxon>Ascomycota</taxon>
        <taxon>Saccharomycotina</taxon>
        <taxon>Saccharomycetes</taxon>
        <taxon>Saccharomycetales</taxon>
        <taxon>Saccharomycetaceae</taxon>
        <taxon>Saccharomyces</taxon>
    </lineage>
</organism>
<proteinExistence type="evidence at protein level"/>
<name>SYH1_YEAST</name>
<dbReference type="EMBL" id="U43281">
    <property type="protein sequence ID" value="AAB68195.1"/>
    <property type="molecule type" value="Genomic_DNA"/>
</dbReference>
<dbReference type="EMBL" id="BK006949">
    <property type="protein sequence ID" value="DAA11328.1"/>
    <property type="molecule type" value="Genomic_DNA"/>
</dbReference>
<dbReference type="PIR" id="S61962">
    <property type="entry name" value="S61962"/>
</dbReference>
<dbReference type="RefSeq" id="NP_015220.1">
    <property type="nucleotide sequence ID" value="NM_001183919.1"/>
</dbReference>
<dbReference type="SMR" id="Q02875"/>
<dbReference type="BioGRID" id="36076">
    <property type="interactions" value="157"/>
</dbReference>
<dbReference type="DIP" id="DIP-961N"/>
<dbReference type="FunCoup" id="Q02875">
    <property type="interactions" value="48"/>
</dbReference>
<dbReference type="IntAct" id="Q02875">
    <property type="interactions" value="8"/>
</dbReference>
<dbReference type="MINT" id="Q02875"/>
<dbReference type="STRING" id="4932.YPL105C"/>
<dbReference type="GlyGen" id="Q02875">
    <property type="glycosylation" value="3 sites, 1 O-linked glycan (2 sites)"/>
</dbReference>
<dbReference type="iPTMnet" id="Q02875"/>
<dbReference type="PaxDb" id="4932-YPL105C"/>
<dbReference type="PeptideAtlas" id="Q02875"/>
<dbReference type="EnsemblFungi" id="YPL105C_mRNA">
    <property type="protein sequence ID" value="YPL105C"/>
    <property type="gene ID" value="YPL105C"/>
</dbReference>
<dbReference type="GeneID" id="855999"/>
<dbReference type="KEGG" id="sce:YPL105C"/>
<dbReference type="AGR" id="SGD:S000006026"/>
<dbReference type="SGD" id="S000006026">
    <property type="gene designation" value="SYH1"/>
</dbReference>
<dbReference type="VEuPathDB" id="FungiDB:YPL105C"/>
<dbReference type="eggNOG" id="KOG1862">
    <property type="taxonomic scope" value="Eukaryota"/>
</dbReference>
<dbReference type="GeneTree" id="ENSGT00940000176785"/>
<dbReference type="HOGENOM" id="CLU_019270_0_0_1"/>
<dbReference type="InParanoid" id="Q02875"/>
<dbReference type="OMA" id="RQEFLRW"/>
<dbReference type="OrthoDB" id="48509at2759"/>
<dbReference type="BioCyc" id="YEAST:G3O-34007-MONOMER"/>
<dbReference type="BioGRID-ORCS" id="855999">
    <property type="hits" value="3 hits in 10 CRISPR screens"/>
</dbReference>
<dbReference type="CD-CODE" id="A777E0F8">
    <property type="entry name" value="P-body"/>
</dbReference>
<dbReference type="CD-CODE" id="E03F929F">
    <property type="entry name" value="Stress granule"/>
</dbReference>
<dbReference type="PRO" id="PR:Q02875"/>
<dbReference type="Proteomes" id="UP000002311">
    <property type="component" value="Chromosome XVI"/>
</dbReference>
<dbReference type="RNAct" id="Q02875">
    <property type="molecule type" value="protein"/>
</dbReference>
<dbReference type="GO" id="GO:0005737">
    <property type="term" value="C:cytoplasm"/>
    <property type="evidence" value="ECO:0000314"/>
    <property type="project" value="SGD"/>
</dbReference>
<dbReference type="GO" id="GO:0005829">
    <property type="term" value="C:cytosol"/>
    <property type="evidence" value="ECO:0000318"/>
    <property type="project" value="GO_Central"/>
</dbReference>
<dbReference type="GO" id="GO:0005739">
    <property type="term" value="C:mitochondrion"/>
    <property type="evidence" value="ECO:0007005"/>
    <property type="project" value="SGD"/>
</dbReference>
<dbReference type="GO" id="GO:0051664">
    <property type="term" value="P:nuclear pore localization"/>
    <property type="evidence" value="ECO:0000316"/>
    <property type="project" value="SGD"/>
</dbReference>
<dbReference type="CDD" id="cd00072">
    <property type="entry name" value="GYF"/>
    <property type="match status" value="1"/>
</dbReference>
<dbReference type="Gene3D" id="3.30.1490.40">
    <property type="match status" value="1"/>
</dbReference>
<dbReference type="InterPro" id="IPR051640">
    <property type="entry name" value="GRB10-interact_GYF"/>
</dbReference>
<dbReference type="InterPro" id="IPR003169">
    <property type="entry name" value="GYF"/>
</dbReference>
<dbReference type="InterPro" id="IPR035445">
    <property type="entry name" value="GYF-like_dom_sf"/>
</dbReference>
<dbReference type="PANTHER" id="PTHR14445:SF36">
    <property type="entry name" value="FI03272P-RELATED"/>
    <property type="match status" value="1"/>
</dbReference>
<dbReference type="PANTHER" id="PTHR14445">
    <property type="entry name" value="GRB10 INTERACTING GYF PROTEIN"/>
    <property type="match status" value="1"/>
</dbReference>
<dbReference type="Pfam" id="PF02213">
    <property type="entry name" value="GYF"/>
    <property type="match status" value="1"/>
</dbReference>
<dbReference type="SMART" id="SM00444">
    <property type="entry name" value="GYF"/>
    <property type="match status" value="1"/>
</dbReference>
<dbReference type="SUPFAM" id="SSF55277">
    <property type="entry name" value="GYF domain"/>
    <property type="match status" value="1"/>
</dbReference>
<dbReference type="PROSITE" id="PS50829">
    <property type="entry name" value="GYF"/>
    <property type="match status" value="1"/>
</dbReference>
<gene>
    <name type="primary">SYH1</name>
    <name type="ordered locus">YPL105C</name>
</gene>
<reference key="1">
    <citation type="journal article" date="1997" name="Nature">
        <title>The nucleotide sequence of Saccharomyces cerevisiae chromosome XVI.</title>
        <authorList>
            <person name="Bussey H."/>
            <person name="Storms R.K."/>
            <person name="Ahmed A."/>
            <person name="Albermann K."/>
            <person name="Allen E."/>
            <person name="Ansorge W."/>
            <person name="Araujo R."/>
            <person name="Aparicio A."/>
            <person name="Barrell B.G."/>
            <person name="Badcock K."/>
            <person name="Benes V."/>
            <person name="Botstein D."/>
            <person name="Bowman S."/>
            <person name="Brueckner M."/>
            <person name="Carpenter J."/>
            <person name="Cherry J.M."/>
            <person name="Chung E."/>
            <person name="Churcher C.M."/>
            <person name="Coster F."/>
            <person name="Davis K."/>
            <person name="Davis R.W."/>
            <person name="Dietrich F.S."/>
            <person name="Delius H."/>
            <person name="DiPaolo T."/>
            <person name="Dubois E."/>
            <person name="Duesterhoeft A."/>
            <person name="Duncan M."/>
            <person name="Floeth M."/>
            <person name="Fortin N."/>
            <person name="Friesen J.D."/>
            <person name="Fritz C."/>
            <person name="Goffeau A."/>
            <person name="Hall J."/>
            <person name="Hebling U."/>
            <person name="Heumann K."/>
            <person name="Hilbert H."/>
            <person name="Hillier L.W."/>
            <person name="Hunicke-Smith S."/>
            <person name="Hyman R.W."/>
            <person name="Johnston M."/>
            <person name="Kalman S."/>
            <person name="Kleine K."/>
            <person name="Komp C."/>
            <person name="Kurdi O."/>
            <person name="Lashkari D."/>
            <person name="Lew H."/>
            <person name="Lin A."/>
            <person name="Lin D."/>
            <person name="Louis E.J."/>
            <person name="Marathe R."/>
            <person name="Messenguy F."/>
            <person name="Mewes H.-W."/>
            <person name="Mirtipati S."/>
            <person name="Moestl D."/>
            <person name="Mueller-Auer S."/>
            <person name="Namath A."/>
            <person name="Nentwich U."/>
            <person name="Oefner P."/>
            <person name="Pearson D."/>
            <person name="Petel F.X."/>
            <person name="Pohl T.M."/>
            <person name="Purnelle B."/>
            <person name="Rajandream M.A."/>
            <person name="Rechmann S."/>
            <person name="Rieger M."/>
            <person name="Riles L."/>
            <person name="Roberts D."/>
            <person name="Schaefer M."/>
            <person name="Scharfe M."/>
            <person name="Scherens B."/>
            <person name="Schramm S."/>
            <person name="Schroeder M."/>
            <person name="Sdicu A.-M."/>
            <person name="Tettelin H."/>
            <person name="Urrestarazu L.A."/>
            <person name="Ushinsky S."/>
            <person name="Vierendeels F."/>
            <person name="Vissers S."/>
            <person name="Voss H."/>
            <person name="Walsh S.V."/>
            <person name="Wambutt R."/>
            <person name="Wang Y."/>
            <person name="Wedler E."/>
            <person name="Wedler H."/>
            <person name="Winnett E."/>
            <person name="Zhong W.-W."/>
            <person name="Zollner A."/>
            <person name="Vo D.H."/>
            <person name="Hani J."/>
        </authorList>
    </citation>
    <scope>NUCLEOTIDE SEQUENCE [LARGE SCALE GENOMIC DNA]</scope>
    <source>
        <strain>ATCC 204508 / S288c</strain>
    </source>
</reference>
<reference key="2">
    <citation type="journal article" date="2014" name="G3 (Bethesda)">
        <title>The reference genome sequence of Saccharomyces cerevisiae: Then and now.</title>
        <authorList>
            <person name="Engel S.R."/>
            <person name="Dietrich F.S."/>
            <person name="Fisk D.G."/>
            <person name="Binkley G."/>
            <person name="Balakrishnan R."/>
            <person name="Costanzo M.C."/>
            <person name="Dwight S.S."/>
            <person name="Hitz B.C."/>
            <person name="Karra K."/>
            <person name="Nash R.S."/>
            <person name="Weng S."/>
            <person name="Wong E.D."/>
            <person name="Lloyd P."/>
            <person name="Skrzypek M.S."/>
            <person name="Miyasato S.R."/>
            <person name="Simison M."/>
            <person name="Cherry J.M."/>
        </authorList>
    </citation>
    <scope>GENOME REANNOTATION</scope>
    <source>
        <strain>ATCC 204508 / S288c</strain>
    </source>
</reference>
<reference key="3">
    <citation type="journal article" date="2003" name="Nature">
        <title>Global analysis of protein localization in budding yeast.</title>
        <authorList>
            <person name="Huh W.-K."/>
            <person name="Falvo J.V."/>
            <person name="Gerke L.C."/>
            <person name="Carroll A.S."/>
            <person name="Howson R.W."/>
            <person name="Weissman J.S."/>
            <person name="O'Shea E.K."/>
        </authorList>
    </citation>
    <scope>SUBCELLULAR LOCATION [LARGE SCALE ANALYSIS]</scope>
</reference>
<reference key="4">
    <citation type="journal article" date="2003" name="Nature">
        <title>Global analysis of protein expression in yeast.</title>
        <authorList>
            <person name="Ghaemmaghami S."/>
            <person name="Huh W.-K."/>
            <person name="Bower K."/>
            <person name="Howson R.W."/>
            <person name="Belle A."/>
            <person name="Dephoure N."/>
            <person name="O'Shea E.K."/>
            <person name="Weissman J.S."/>
        </authorList>
    </citation>
    <scope>LEVEL OF PROTEIN EXPRESSION [LARGE SCALE ANALYSIS]</scope>
</reference>
<reference key="5">
    <citation type="journal article" date="2005" name="Mol. Cell. Proteomics">
        <title>GYF domain proteomics reveals interaction sites in known and novel target proteins.</title>
        <authorList>
            <person name="Kofler M."/>
            <person name="Motzny K."/>
            <person name="Freund C."/>
        </authorList>
    </citation>
    <scope>INTERACTION WITH EAP1 AND MSL5</scope>
</reference>
<reference key="6">
    <citation type="journal article" date="2006" name="Genes Dev.">
        <title>Systematic identification and functional screens of uncharacterized proteins associated with eukaryotic ribosomal complexes.</title>
        <authorList>
            <person name="Fleischer T.C."/>
            <person name="Weaver C.M."/>
            <person name="McAfee K.J."/>
            <person name="Jennings J.L."/>
            <person name="Link A.J."/>
        </authorList>
    </citation>
    <scope>COPURIFICATION WITH RIBOSOMAL COMPLEXES</scope>
    <scope>IDENTIFICATION BY MASS SPECTROMETRY</scope>
</reference>
<reference key="7">
    <citation type="journal article" date="2007" name="J. Proteome Res.">
        <title>Large-scale phosphorylation analysis of alpha-factor-arrested Saccharomyces cerevisiae.</title>
        <authorList>
            <person name="Li X."/>
            <person name="Gerber S.A."/>
            <person name="Rudner A.D."/>
            <person name="Beausoleil S.A."/>
            <person name="Haas W."/>
            <person name="Villen J."/>
            <person name="Elias J.E."/>
            <person name="Gygi S.P."/>
        </authorList>
    </citation>
    <scope>IDENTIFICATION BY MASS SPECTROMETRY [LARGE SCALE ANALYSIS]</scope>
    <source>
        <strain>ADR376</strain>
    </source>
</reference>
<reference key="8">
    <citation type="journal article" date="2008" name="Mol. Cell. Proteomics">
        <title>A multidimensional chromatography technology for in-depth phosphoproteome analysis.</title>
        <authorList>
            <person name="Albuquerque C.P."/>
            <person name="Smolka M.B."/>
            <person name="Payne S.H."/>
            <person name="Bafna V."/>
            <person name="Eng J."/>
            <person name="Zhou H."/>
        </authorList>
    </citation>
    <scope>IDENTIFICATION BY MASS SPECTROMETRY [LARGE SCALE ANALYSIS]</scope>
</reference>
<reference key="9">
    <citation type="journal article" date="2009" name="Science">
        <title>Global analysis of Cdk1 substrate phosphorylation sites provides insights into evolution.</title>
        <authorList>
            <person name="Holt L.J."/>
            <person name="Tuch B.B."/>
            <person name="Villen J."/>
            <person name="Johnson A.D."/>
            <person name="Gygi S.P."/>
            <person name="Morgan D.O."/>
        </authorList>
    </citation>
    <scope>PHOSPHORYLATION [LARGE SCALE ANALYSIS] AT THR-350</scope>
    <scope>IDENTIFICATION BY MASS SPECTROMETRY [LARGE SCALE ANALYSIS]</scope>
</reference>
<evidence type="ECO:0000255" key="1"/>
<evidence type="ECO:0000255" key="2">
    <source>
        <dbReference type="PROSITE-ProRule" id="PRU00101"/>
    </source>
</evidence>
<evidence type="ECO:0000256" key="3">
    <source>
        <dbReference type="SAM" id="MobiDB-lite"/>
    </source>
</evidence>
<evidence type="ECO:0000269" key="4">
    <source>
    </source>
</evidence>
<evidence type="ECO:0000269" key="5">
    <source>
    </source>
</evidence>
<evidence type="ECO:0000269" key="6">
    <source>
    </source>
</evidence>
<evidence type="ECO:0000305" key="7"/>
<evidence type="ECO:0007744" key="8">
    <source>
    </source>
</evidence>
<accession>Q02875</accession>
<accession>D6W3R2</accession>
<keyword id="KW-0175">Coiled coil</keyword>
<keyword id="KW-0963">Cytoplasm</keyword>
<keyword id="KW-0597">Phosphoprotein</keyword>
<keyword id="KW-1185">Reference proteome</keyword>